<accession>Q72YW2</accession>
<evidence type="ECO:0000255" key="1">
    <source>
        <dbReference type="HAMAP-Rule" id="MF_00316"/>
    </source>
</evidence>
<protein>
    <recommendedName>
        <fullName evidence="1">Probable molybdenum cofactor guanylyltransferase</fullName>
        <shortName evidence="1">MoCo guanylyltransferase</shortName>
        <ecNumber evidence="1">2.7.7.77</ecNumber>
    </recommendedName>
    <alternativeName>
        <fullName evidence="1">GTP:molybdopterin guanylyltransferase</fullName>
    </alternativeName>
    <alternativeName>
        <fullName evidence="1">Mo-MPT guanylyltransferase</fullName>
    </alternativeName>
    <alternativeName>
        <fullName evidence="1">Molybdopterin guanylyltransferase</fullName>
    </alternativeName>
    <alternativeName>
        <fullName evidence="1">Molybdopterin-guanine dinucleotide synthase</fullName>
        <shortName evidence="1">MGD synthase</shortName>
    </alternativeName>
</protein>
<comment type="function">
    <text evidence="1">Transfers a GMP moiety from GTP to Mo-molybdopterin (Mo-MPT) cofactor (Moco or molybdenum cofactor) to form Mo-molybdopterin guanine dinucleotide (Mo-MGD) cofactor.</text>
</comment>
<comment type="catalytic activity">
    <reaction evidence="1">
        <text>Mo-molybdopterin + GTP + H(+) = Mo-molybdopterin guanine dinucleotide + diphosphate</text>
        <dbReference type="Rhea" id="RHEA:34243"/>
        <dbReference type="ChEBI" id="CHEBI:15378"/>
        <dbReference type="ChEBI" id="CHEBI:33019"/>
        <dbReference type="ChEBI" id="CHEBI:37565"/>
        <dbReference type="ChEBI" id="CHEBI:71302"/>
        <dbReference type="ChEBI" id="CHEBI:71310"/>
        <dbReference type="EC" id="2.7.7.77"/>
    </reaction>
</comment>
<comment type="cofactor">
    <cofactor evidence="1">
        <name>Mg(2+)</name>
        <dbReference type="ChEBI" id="CHEBI:18420"/>
    </cofactor>
</comment>
<comment type="subcellular location">
    <subcellularLocation>
        <location evidence="1">Cytoplasm</location>
    </subcellularLocation>
</comment>
<comment type="domain">
    <text evidence="1">The N-terminal domain determines nucleotide recognition and specific binding, while the C-terminal domain determines the specific binding to the target protein.</text>
</comment>
<comment type="similarity">
    <text evidence="1">Belongs to the MobA family.</text>
</comment>
<dbReference type="EC" id="2.7.7.77" evidence="1"/>
<dbReference type="EMBL" id="AE017194">
    <property type="protein sequence ID" value="AAS43809.1"/>
    <property type="molecule type" value="Genomic_DNA"/>
</dbReference>
<dbReference type="SMR" id="Q72YW2"/>
<dbReference type="KEGG" id="bca:BCE_4908"/>
<dbReference type="HOGENOM" id="CLU_055597_2_0_9"/>
<dbReference type="Proteomes" id="UP000002527">
    <property type="component" value="Chromosome"/>
</dbReference>
<dbReference type="GO" id="GO:0005737">
    <property type="term" value="C:cytoplasm"/>
    <property type="evidence" value="ECO:0007669"/>
    <property type="project" value="UniProtKB-SubCell"/>
</dbReference>
<dbReference type="GO" id="GO:0005525">
    <property type="term" value="F:GTP binding"/>
    <property type="evidence" value="ECO:0007669"/>
    <property type="project" value="UniProtKB-UniRule"/>
</dbReference>
<dbReference type="GO" id="GO:0046872">
    <property type="term" value="F:metal ion binding"/>
    <property type="evidence" value="ECO:0007669"/>
    <property type="project" value="UniProtKB-KW"/>
</dbReference>
<dbReference type="GO" id="GO:0061603">
    <property type="term" value="F:molybdenum cofactor guanylyltransferase activity"/>
    <property type="evidence" value="ECO:0007669"/>
    <property type="project" value="UniProtKB-EC"/>
</dbReference>
<dbReference type="GO" id="GO:0006777">
    <property type="term" value="P:Mo-molybdopterin cofactor biosynthetic process"/>
    <property type="evidence" value="ECO:0007669"/>
    <property type="project" value="UniProtKB-KW"/>
</dbReference>
<dbReference type="CDD" id="cd02503">
    <property type="entry name" value="MobA"/>
    <property type="match status" value="1"/>
</dbReference>
<dbReference type="FunFam" id="3.90.550.10:FF:000121">
    <property type="entry name" value="Probable molybdenum cofactor guanylyltransferase"/>
    <property type="match status" value="1"/>
</dbReference>
<dbReference type="Gene3D" id="3.90.550.10">
    <property type="entry name" value="Spore Coat Polysaccharide Biosynthesis Protein SpsA, Chain A"/>
    <property type="match status" value="1"/>
</dbReference>
<dbReference type="HAMAP" id="MF_00316">
    <property type="entry name" value="MobA"/>
    <property type="match status" value="1"/>
</dbReference>
<dbReference type="InterPro" id="IPR025877">
    <property type="entry name" value="MobA-like_NTP_Trfase"/>
</dbReference>
<dbReference type="InterPro" id="IPR013482">
    <property type="entry name" value="Molybde_CF_guanTrfase"/>
</dbReference>
<dbReference type="InterPro" id="IPR029044">
    <property type="entry name" value="Nucleotide-diphossugar_trans"/>
</dbReference>
<dbReference type="PANTHER" id="PTHR19136">
    <property type="entry name" value="MOLYBDENUM COFACTOR GUANYLYLTRANSFERASE"/>
    <property type="match status" value="1"/>
</dbReference>
<dbReference type="PANTHER" id="PTHR19136:SF81">
    <property type="entry name" value="MOLYBDENUM COFACTOR GUANYLYLTRANSFERASE"/>
    <property type="match status" value="1"/>
</dbReference>
<dbReference type="Pfam" id="PF12804">
    <property type="entry name" value="NTP_transf_3"/>
    <property type="match status" value="1"/>
</dbReference>
<dbReference type="SUPFAM" id="SSF53448">
    <property type="entry name" value="Nucleotide-diphospho-sugar transferases"/>
    <property type="match status" value="1"/>
</dbReference>
<gene>
    <name evidence="1" type="primary">mobA</name>
    <name type="ordered locus">BCE_4908</name>
</gene>
<name>MOBA_BACC1</name>
<organism>
    <name type="scientific">Bacillus cereus (strain ATCC 10987 / NRS 248)</name>
    <dbReference type="NCBI Taxonomy" id="222523"/>
    <lineage>
        <taxon>Bacteria</taxon>
        <taxon>Bacillati</taxon>
        <taxon>Bacillota</taxon>
        <taxon>Bacilli</taxon>
        <taxon>Bacillales</taxon>
        <taxon>Bacillaceae</taxon>
        <taxon>Bacillus</taxon>
        <taxon>Bacillus cereus group</taxon>
    </lineage>
</organism>
<sequence length="200" mass="22492">MSKWAGIVLAGGMSSRFGEPKALASWQGSTFIEHILKVMTSALQEVVVISHSDIKERVEQFVQVPVIEDIPHYKGDGPLAGIVSGMEYIEADWYAIMPCDAPNVSQEWFTILLEQTSKEYDAVVPIINGRKQPLLAAYHNRVKEKIYALLQEEKRSMGQLLSQCNVKYIAGEDVQANADWFINVNTKEEYVQAQKDLSNE</sequence>
<proteinExistence type="inferred from homology"/>
<reference key="1">
    <citation type="journal article" date="2004" name="Nucleic Acids Res.">
        <title>The genome sequence of Bacillus cereus ATCC 10987 reveals metabolic adaptations and a large plasmid related to Bacillus anthracis pXO1.</title>
        <authorList>
            <person name="Rasko D.A."/>
            <person name="Ravel J."/>
            <person name="Oekstad O.A."/>
            <person name="Helgason E."/>
            <person name="Cer R.Z."/>
            <person name="Jiang L."/>
            <person name="Shores K.A."/>
            <person name="Fouts D.E."/>
            <person name="Tourasse N.J."/>
            <person name="Angiuoli S.V."/>
            <person name="Kolonay J.F."/>
            <person name="Nelson W.C."/>
            <person name="Kolstoe A.-B."/>
            <person name="Fraser C.M."/>
            <person name="Read T.D."/>
        </authorList>
    </citation>
    <scope>NUCLEOTIDE SEQUENCE [LARGE SCALE GENOMIC DNA]</scope>
    <source>
        <strain>ATCC 10987 / NRS 248</strain>
    </source>
</reference>
<feature type="chain" id="PRO_1000019099" description="Probable molybdenum cofactor guanylyltransferase">
    <location>
        <begin position="1"/>
        <end position="200"/>
    </location>
</feature>
<feature type="binding site" evidence="1">
    <location>
        <begin position="9"/>
        <end position="11"/>
    </location>
    <ligand>
        <name>GTP</name>
        <dbReference type="ChEBI" id="CHEBI:37565"/>
    </ligand>
</feature>
<feature type="binding site" evidence="1">
    <location>
        <position position="21"/>
    </location>
    <ligand>
        <name>GTP</name>
        <dbReference type="ChEBI" id="CHEBI:37565"/>
    </ligand>
</feature>
<feature type="binding site" evidence="1">
    <location>
        <position position="69"/>
    </location>
    <ligand>
        <name>GTP</name>
        <dbReference type="ChEBI" id="CHEBI:37565"/>
    </ligand>
</feature>
<feature type="binding site" evidence="1">
    <location>
        <position position="100"/>
    </location>
    <ligand>
        <name>GTP</name>
        <dbReference type="ChEBI" id="CHEBI:37565"/>
    </ligand>
</feature>
<feature type="binding site" evidence="1">
    <location>
        <position position="100"/>
    </location>
    <ligand>
        <name>Mg(2+)</name>
        <dbReference type="ChEBI" id="CHEBI:18420"/>
    </ligand>
</feature>
<keyword id="KW-0963">Cytoplasm</keyword>
<keyword id="KW-0342">GTP-binding</keyword>
<keyword id="KW-0460">Magnesium</keyword>
<keyword id="KW-0479">Metal-binding</keyword>
<keyword id="KW-0501">Molybdenum cofactor biosynthesis</keyword>
<keyword id="KW-0547">Nucleotide-binding</keyword>
<keyword id="KW-0808">Transferase</keyword>